<evidence type="ECO:0000250" key="1"/>
<evidence type="ECO:0000255" key="2"/>
<evidence type="ECO:0000305" key="3"/>
<accession>Q9C2D4</accession>
<gene>
    <name type="ORF">9G6.310</name>
    <name type="ORF">NCU04127</name>
</gene>
<comment type="function">
    <text evidence="3">Necessary for protein translocation in the endoplasmic reticulum.</text>
</comment>
<comment type="subunit">
    <text evidence="1">Heterotrimeric complex composed of SEC61-alpha, SEC61-beta and SEC61-gamma.</text>
</comment>
<comment type="subcellular location">
    <subcellularLocation>
        <location evidence="3">Endoplasmic reticulum membrane</location>
        <topology evidence="3">Single-pass membrane protein</topology>
    </subcellularLocation>
</comment>
<comment type="similarity">
    <text evidence="3">Belongs to the SecE/SEC61-gamma family.</text>
</comment>
<protein>
    <recommendedName>
        <fullName>Probable protein transport protein Sec61 subunit gamma</fullName>
    </recommendedName>
</protein>
<dbReference type="EMBL" id="AL513463">
    <property type="protein sequence ID" value="CAC28779.2"/>
    <property type="molecule type" value="Genomic_DNA"/>
</dbReference>
<dbReference type="EMBL" id="CM002240">
    <property type="protein sequence ID" value="EAA32047.1"/>
    <property type="molecule type" value="Genomic_DNA"/>
</dbReference>
<dbReference type="RefSeq" id="XP_961283.1">
    <property type="nucleotide sequence ID" value="XM_956190.3"/>
</dbReference>
<dbReference type="SMR" id="Q9C2D4"/>
<dbReference type="FunCoup" id="Q9C2D4">
    <property type="interactions" value="474"/>
</dbReference>
<dbReference type="STRING" id="367110.Q9C2D4"/>
<dbReference type="PaxDb" id="5141-EFNCRP00000003802"/>
<dbReference type="EnsemblFungi" id="EAA32047">
    <property type="protein sequence ID" value="EAA32047"/>
    <property type="gene ID" value="NCU04127"/>
</dbReference>
<dbReference type="GeneID" id="3877447"/>
<dbReference type="KEGG" id="ncr:NCU04127"/>
<dbReference type="VEuPathDB" id="FungiDB:NCU04127"/>
<dbReference type="HOGENOM" id="CLU_167752_2_0_1"/>
<dbReference type="InParanoid" id="Q9C2D4"/>
<dbReference type="OMA" id="KPDQKEY"/>
<dbReference type="OrthoDB" id="2401875at2759"/>
<dbReference type="Proteomes" id="UP000001805">
    <property type="component" value="Chromosome 2, Linkage Group V"/>
</dbReference>
<dbReference type="GO" id="GO:0071261">
    <property type="term" value="C:Ssh1 translocon complex"/>
    <property type="evidence" value="ECO:0000318"/>
    <property type="project" value="GO_Central"/>
</dbReference>
<dbReference type="GO" id="GO:0008320">
    <property type="term" value="F:protein transmembrane transporter activity"/>
    <property type="evidence" value="ECO:0000318"/>
    <property type="project" value="GO_Central"/>
</dbReference>
<dbReference type="GO" id="GO:0031204">
    <property type="term" value="P:post-translational protein targeting to membrane, translocation"/>
    <property type="evidence" value="ECO:0000318"/>
    <property type="project" value="GO_Central"/>
</dbReference>
<dbReference type="Gene3D" id="1.20.5.820">
    <property type="entry name" value="Preprotein translocase SecE subunit"/>
    <property type="match status" value="1"/>
</dbReference>
<dbReference type="HAMAP" id="MF_00422">
    <property type="entry name" value="SecE"/>
    <property type="match status" value="1"/>
</dbReference>
<dbReference type="InterPro" id="IPR023391">
    <property type="entry name" value="Prot_translocase_SecE_dom_sf"/>
</dbReference>
<dbReference type="InterPro" id="IPR008158">
    <property type="entry name" value="Translocase_Sec61-g"/>
</dbReference>
<dbReference type="InterPro" id="IPR001901">
    <property type="entry name" value="Translocase_SecE/Sec61-g"/>
</dbReference>
<dbReference type="NCBIfam" id="TIGR00327">
    <property type="entry name" value="secE_euk_arch"/>
    <property type="match status" value="1"/>
</dbReference>
<dbReference type="PANTHER" id="PTHR12309">
    <property type="entry name" value="SEC61 GAMMA SUBUNIT"/>
    <property type="match status" value="1"/>
</dbReference>
<dbReference type="Pfam" id="PF00584">
    <property type="entry name" value="SecE"/>
    <property type="match status" value="1"/>
</dbReference>
<dbReference type="SUPFAM" id="SSF103456">
    <property type="entry name" value="Preprotein translocase SecE subunit"/>
    <property type="match status" value="1"/>
</dbReference>
<dbReference type="PROSITE" id="PS01067">
    <property type="entry name" value="SECE_SEC61G"/>
    <property type="match status" value="1"/>
</dbReference>
<proteinExistence type="inferred from homology"/>
<feature type="chain" id="PRO_0000104209" description="Probable protein transport protein Sec61 subunit gamma">
    <location>
        <begin position="1"/>
        <end position="70"/>
    </location>
</feature>
<feature type="topological domain" description="Cytoplasmic" evidence="2">
    <location>
        <begin position="1"/>
        <end position="39"/>
    </location>
</feature>
<feature type="transmembrane region" description="Helical" evidence="2">
    <location>
        <begin position="40"/>
        <end position="58"/>
    </location>
</feature>
<feature type="topological domain" description="Extracellular" evidence="2">
    <location>
        <begin position="59"/>
        <end position="70"/>
    </location>
</feature>
<organism>
    <name type="scientific">Neurospora crassa (strain ATCC 24698 / 74-OR23-1A / CBS 708.71 / DSM 1257 / FGSC 987)</name>
    <dbReference type="NCBI Taxonomy" id="367110"/>
    <lineage>
        <taxon>Eukaryota</taxon>
        <taxon>Fungi</taxon>
        <taxon>Dikarya</taxon>
        <taxon>Ascomycota</taxon>
        <taxon>Pezizomycotina</taxon>
        <taxon>Sordariomycetes</taxon>
        <taxon>Sordariomycetidae</taxon>
        <taxon>Sordariales</taxon>
        <taxon>Sordariaceae</taxon>
        <taxon>Neurospora</taxon>
    </lineage>
</organism>
<name>SC61G_NEUCR</name>
<sequence>MADQIQEILDVPREFLKDGIQFIKKCQKPDRREFIKISQAVGTGFLIMGAVGYLVKLIHIPLNQVLVGGA</sequence>
<reference key="1">
    <citation type="journal article" date="2003" name="Nucleic Acids Res.">
        <title>What's in the genome of a filamentous fungus? Analysis of the Neurospora genome sequence.</title>
        <authorList>
            <person name="Mannhaupt G."/>
            <person name="Montrone C."/>
            <person name="Haase D."/>
            <person name="Mewes H.-W."/>
            <person name="Aign V."/>
            <person name="Hoheisel J.D."/>
            <person name="Fartmann B."/>
            <person name="Nyakatura G."/>
            <person name="Kempken F."/>
            <person name="Maier J."/>
            <person name="Schulte U."/>
        </authorList>
    </citation>
    <scope>NUCLEOTIDE SEQUENCE [LARGE SCALE GENOMIC DNA]</scope>
    <source>
        <strain>ATCC 24698 / 74-OR23-1A / CBS 708.71 / DSM 1257 / FGSC 987</strain>
    </source>
</reference>
<reference key="2">
    <citation type="journal article" date="2003" name="Nature">
        <title>The genome sequence of the filamentous fungus Neurospora crassa.</title>
        <authorList>
            <person name="Galagan J.E."/>
            <person name="Calvo S.E."/>
            <person name="Borkovich K.A."/>
            <person name="Selker E.U."/>
            <person name="Read N.D."/>
            <person name="Jaffe D.B."/>
            <person name="FitzHugh W."/>
            <person name="Ma L.-J."/>
            <person name="Smirnov S."/>
            <person name="Purcell S."/>
            <person name="Rehman B."/>
            <person name="Elkins T."/>
            <person name="Engels R."/>
            <person name="Wang S."/>
            <person name="Nielsen C.B."/>
            <person name="Butler J."/>
            <person name="Endrizzi M."/>
            <person name="Qui D."/>
            <person name="Ianakiev P."/>
            <person name="Bell-Pedersen D."/>
            <person name="Nelson M.A."/>
            <person name="Werner-Washburne M."/>
            <person name="Selitrennikoff C.P."/>
            <person name="Kinsey J.A."/>
            <person name="Braun E.L."/>
            <person name="Zelter A."/>
            <person name="Schulte U."/>
            <person name="Kothe G.O."/>
            <person name="Jedd G."/>
            <person name="Mewes H.-W."/>
            <person name="Staben C."/>
            <person name="Marcotte E."/>
            <person name="Greenberg D."/>
            <person name="Roy A."/>
            <person name="Foley K."/>
            <person name="Naylor J."/>
            <person name="Stange-Thomann N."/>
            <person name="Barrett R."/>
            <person name="Gnerre S."/>
            <person name="Kamal M."/>
            <person name="Kamvysselis M."/>
            <person name="Mauceli E.W."/>
            <person name="Bielke C."/>
            <person name="Rudd S."/>
            <person name="Frishman D."/>
            <person name="Krystofova S."/>
            <person name="Rasmussen C."/>
            <person name="Metzenberg R.L."/>
            <person name="Perkins D.D."/>
            <person name="Kroken S."/>
            <person name="Cogoni C."/>
            <person name="Macino G."/>
            <person name="Catcheside D.E.A."/>
            <person name="Li W."/>
            <person name="Pratt R.J."/>
            <person name="Osmani S.A."/>
            <person name="DeSouza C.P.C."/>
            <person name="Glass N.L."/>
            <person name="Orbach M.J."/>
            <person name="Berglund J.A."/>
            <person name="Voelker R."/>
            <person name="Yarden O."/>
            <person name="Plamann M."/>
            <person name="Seiler S."/>
            <person name="Dunlap J.C."/>
            <person name="Radford A."/>
            <person name="Aramayo R."/>
            <person name="Natvig D.O."/>
            <person name="Alex L.A."/>
            <person name="Mannhaupt G."/>
            <person name="Ebbole D.J."/>
            <person name="Freitag M."/>
            <person name="Paulsen I."/>
            <person name="Sachs M.S."/>
            <person name="Lander E.S."/>
            <person name="Nusbaum C."/>
            <person name="Birren B.W."/>
        </authorList>
    </citation>
    <scope>NUCLEOTIDE SEQUENCE [LARGE SCALE GENOMIC DNA]</scope>
    <source>
        <strain>ATCC 24698 / 74-OR23-1A / CBS 708.71 / DSM 1257 / FGSC 987</strain>
    </source>
</reference>
<keyword id="KW-0256">Endoplasmic reticulum</keyword>
<keyword id="KW-0472">Membrane</keyword>
<keyword id="KW-0653">Protein transport</keyword>
<keyword id="KW-1185">Reference proteome</keyword>
<keyword id="KW-0811">Translocation</keyword>
<keyword id="KW-0812">Transmembrane</keyword>
<keyword id="KW-1133">Transmembrane helix</keyword>
<keyword id="KW-0813">Transport</keyword>